<protein>
    <recommendedName>
        <fullName evidence="3">Beta-toxin Tf1</fullName>
    </recommendedName>
</protein>
<sequence>KEGYLMDHEGCKLSCFIRPSGYCGRECAIKKGSSGYCAWPACYCYGLPNWVKVWERATNRCGKK</sequence>
<dbReference type="SMR" id="P0DSO5"/>
<dbReference type="GO" id="GO:0005576">
    <property type="term" value="C:extracellular region"/>
    <property type="evidence" value="ECO:0007669"/>
    <property type="project" value="UniProtKB-SubCell"/>
</dbReference>
<dbReference type="GO" id="GO:0019871">
    <property type="term" value="F:sodium channel inhibitor activity"/>
    <property type="evidence" value="ECO:0007669"/>
    <property type="project" value="InterPro"/>
</dbReference>
<dbReference type="GO" id="GO:0090729">
    <property type="term" value="F:toxin activity"/>
    <property type="evidence" value="ECO:0007669"/>
    <property type="project" value="UniProtKB-KW"/>
</dbReference>
<dbReference type="GO" id="GO:0006952">
    <property type="term" value="P:defense response"/>
    <property type="evidence" value="ECO:0007669"/>
    <property type="project" value="InterPro"/>
</dbReference>
<dbReference type="CDD" id="cd23106">
    <property type="entry name" value="neurotoxins_LC_scorpion"/>
    <property type="match status" value="1"/>
</dbReference>
<dbReference type="FunFam" id="3.30.30.10:FF:000002">
    <property type="entry name" value="Alpha-like toxin BmK-M1"/>
    <property type="match status" value="1"/>
</dbReference>
<dbReference type="Gene3D" id="3.30.30.10">
    <property type="entry name" value="Knottin, scorpion toxin-like"/>
    <property type="match status" value="1"/>
</dbReference>
<dbReference type="InterPro" id="IPR044062">
    <property type="entry name" value="LCN-type_CS_alpha_beta_dom"/>
</dbReference>
<dbReference type="InterPro" id="IPR003614">
    <property type="entry name" value="Scorpion_toxin-like"/>
</dbReference>
<dbReference type="InterPro" id="IPR036574">
    <property type="entry name" value="Scorpion_toxin-like_sf"/>
</dbReference>
<dbReference type="InterPro" id="IPR018218">
    <property type="entry name" value="Scorpion_toxinL"/>
</dbReference>
<dbReference type="InterPro" id="IPR002061">
    <property type="entry name" value="Scorpion_toxinL/defensin"/>
</dbReference>
<dbReference type="Pfam" id="PF00537">
    <property type="entry name" value="Toxin_3"/>
    <property type="match status" value="1"/>
</dbReference>
<dbReference type="PRINTS" id="PR00285">
    <property type="entry name" value="SCORPNTOXIN"/>
</dbReference>
<dbReference type="SMART" id="SM00505">
    <property type="entry name" value="Knot1"/>
    <property type="match status" value="1"/>
</dbReference>
<dbReference type="SUPFAM" id="SSF57095">
    <property type="entry name" value="Scorpion toxin-like"/>
    <property type="match status" value="1"/>
</dbReference>
<dbReference type="PROSITE" id="PS51863">
    <property type="entry name" value="LCN_CSAB"/>
    <property type="match status" value="1"/>
</dbReference>
<keyword id="KW-0027">Amidation</keyword>
<keyword id="KW-1015">Disulfide bond</keyword>
<keyword id="KW-0872">Ion channel impairing toxin</keyword>
<keyword id="KW-0528">Neurotoxin</keyword>
<keyword id="KW-0964">Secreted</keyword>
<keyword id="KW-0800">Toxin</keyword>
<keyword id="KW-0738">Voltage-gated sodium channel impairing toxin</keyword>
<comment type="function">
    <text evidence="1">Beta toxins bind voltage-independently at site-4 of sodium channels (Nav) and shift the voltage of activation toward more negative potentials thereby affecting sodium channel activation and promoting spontaneous and repetitive firing.</text>
</comment>
<comment type="subcellular location">
    <subcellularLocation>
        <location evidence="5">Secreted</location>
    </subcellularLocation>
</comment>
<comment type="tissue specificity">
    <text evidence="5">Expressed by the venom gland.</text>
</comment>
<comment type="domain">
    <text evidence="4">Has the structural arrangement of an alpha-helix connected to antiparallel beta-sheets by disulfide bonds (CS-alpha/beta).</text>
</comment>
<comment type="similarity">
    <text evidence="4">Belongs to the long (4 C-C) scorpion toxin superfamily. Sodium channel inhibitor family. Beta subfamily.</text>
</comment>
<reference key="1">
    <citation type="journal article" date="2015" name="Toxicon">
        <title>General characterization of Tityus fasciolatus scorpion venom. Molecular identification of toxins and localization of linear B-cell epitopes.</title>
        <authorList>
            <person name="Mendes T.M."/>
            <person name="Guimaraes-Okamoto P.T."/>
            <person name="Machado-de-Avila R.A."/>
            <person name="Oliveira D."/>
            <person name="Melo M.M."/>
            <person name="Lobato Z.I."/>
            <person name="Kalapothakis E."/>
            <person name="Chavez-Olortegui C."/>
        </authorList>
    </citation>
    <scope>NUCLEOTIDE SEQUENCE [MRNA]</scope>
    <source>
        <tissue>Venom gland</tissue>
    </source>
</reference>
<proteinExistence type="inferred from homology"/>
<accession>P0DSO5</accession>
<feature type="chain" id="PRO_0000447419" description="Beta-toxin Tf1" evidence="5">
    <location>
        <begin position="1"/>
        <end position="61"/>
    </location>
</feature>
<feature type="domain" description="LCN-type CS-alpha/beta" evidence="2">
    <location>
        <begin position="1"/>
        <end position="62"/>
    </location>
</feature>
<feature type="modified residue" description="Cysteine amide" evidence="1">
    <location>
        <position position="61"/>
    </location>
</feature>
<feature type="disulfide bond" evidence="2">
    <location>
        <begin position="11"/>
        <end position="61"/>
    </location>
</feature>
<feature type="disulfide bond" evidence="2">
    <location>
        <begin position="15"/>
        <end position="37"/>
    </location>
</feature>
<feature type="disulfide bond" evidence="2">
    <location>
        <begin position="23"/>
        <end position="42"/>
    </location>
</feature>
<feature type="disulfide bond" evidence="2">
    <location>
        <begin position="27"/>
        <end position="44"/>
    </location>
</feature>
<evidence type="ECO:0000250" key="1">
    <source>
        <dbReference type="UniProtKB" id="P0DQH5"/>
    </source>
</evidence>
<evidence type="ECO:0000255" key="2">
    <source>
        <dbReference type="PROSITE-ProRule" id="PRU01210"/>
    </source>
</evidence>
<evidence type="ECO:0000303" key="3">
    <source>
    </source>
</evidence>
<evidence type="ECO:0000305" key="4"/>
<evidence type="ECO:0000305" key="5">
    <source>
    </source>
</evidence>
<name>SCX1_TITFA</name>
<organism>
    <name type="scientific">Tityus fasciolatus</name>
    <name type="common">Central Brazilian scorpion</name>
    <dbReference type="NCBI Taxonomy" id="203543"/>
    <lineage>
        <taxon>Eukaryota</taxon>
        <taxon>Metazoa</taxon>
        <taxon>Ecdysozoa</taxon>
        <taxon>Arthropoda</taxon>
        <taxon>Chelicerata</taxon>
        <taxon>Arachnida</taxon>
        <taxon>Scorpiones</taxon>
        <taxon>Buthida</taxon>
        <taxon>Buthoidea</taxon>
        <taxon>Buthidae</taxon>
        <taxon>Tityus</taxon>
    </lineage>
</organism>